<dbReference type="EMBL" id="AY884293">
    <property type="protein sequence ID" value="AAX84184.1"/>
    <property type="molecule type" value="mRNA"/>
</dbReference>
<dbReference type="EMBL" id="AK301482">
    <property type="protein sequence ID" value="BAH13494.1"/>
    <property type="molecule type" value="mRNA"/>
</dbReference>
<dbReference type="EMBL" id="AL832425">
    <property type="protein sequence ID" value="CAH10609.1"/>
    <property type="molecule type" value="mRNA"/>
</dbReference>
<dbReference type="EMBL" id="AP000354">
    <property type="status" value="NOT_ANNOTATED_CDS"/>
    <property type="molecule type" value="Genomic_DNA"/>
</dbReference>
<dbReference type="EMBL" id="AP000355">
    <property type="status" value="NOT_ANNOTATED_CDS"/>
    <property type="molecule type" value="Genomic_DNA"/>
</dbReference>
<dbReference type="EMBL" id="AB002374">
    <property type="protein sequence ID" value="BAA21574.1"/>
    <property type="molecule type" value="mRNA"/>
</dbReference>
<dbReference type="CCDS" id="CCDS33619.1">
    <molecule id="Q69YQ0-1"/>
</dbReference>
<dbReference type="CCDS" id="CCDS58797.1">
    <molecule id="Q69YQ0-2"/>
</dbReference>
<dbReference type="RefSeq" id="NP_001138940.4">
    <molecule id="Q69YQ0-1"/>
    <property type="nucleotide sequence ID" value="NM_001145468.4"/>
</dbReference>
<dbReference type="RefSeq" id="NP_001241661.3">
    <molecule id="Q69YQ0-2"/>
    <property type="nucleotide sequence ID" value="NM_001254732.3"/>
</dbReference>
<dbReference type="RefSeq" id="NP_056145.5">
    <molecule id="Q69YQ0-1"/>
    <property type="nucleotide sequence ID" value="NM_015330.6"/>
</dbReference>
<dbReference type="SMR" id="Q69YQ0"/>
<dbReference type="BioGRID" id="116960">
    <property type="interactions" value="226"/>
</dbReference>
<dbReference type="DIP" id="DIP-33173N"/>
<dbReference type="FunCoup" id="Q69YQ0">
    <property type="interactions" value="1570"/>
</dbReference>
<dbReference type="IntAct" id="Q69YQ0">
    <property type="interactions" value="126"/>
</dbReference>
<dbReference type="MINT" id="Q69YQ0"/>
<dbReference type="STRING" id="9606.ENSP00000325785"/>
<dbReference type="GlyGen" id="Q69YQ0">
    <property type="glycosylation" value="3 sites, 1 O-linked glycan (2 sites)"/>
</dbReference>
<dbReference type="iPTMnet" id="Q69YQ0"/>
<dbReference type="MetOSite" id="Q69YQ0"/>
<dbReference type="PhosphoSitePlus" id="Q69YQ0"/>
<dbReference type="BioMuta" id="SPECC1L"/>
<dbReference type="DMDM" id="300669640"/>
<dbReference type="jPOST" id="Q69YQ0"/>
<dbReference type="MassIVE" id="Q69YQ0"/>
<dbReference type="PaxDb" id="9606-ENSP00000325785"/>
<dbReference type="PeptideAtlas" id="Q69YQ0"/>
<dbReference type="ProteomicsDB" id="25658"/>
<dbReference type="ProteomicsDB" id="66168">
    <molecule id="Q69YQ0-1"/>
</dbReference>
<dbReference type="Pumba" id="Q69YQ0"/>
<dbReference type="Antibodypedia" id="45171">
    <property type="antibodies" value="134 antibodies from 23 providers"/>
</dbReference>
<dbReference type="DNASU" id="23384"/>
<dbReference type="Ensembl" id="ENST00000314328.14">
    <molecule id="Q69YQ0-1"/>
    <property type="protein sequence ID" value="ENSP00000325785.8"/>
    <property type="gene ID" value="ENSG00000100014.20"/>
</dbReference>
<dbReference type="Ensembl" id="ENST00000437398.5">
    <molecule id="Q69YQ0-1"/>
    <property type="protein sequence ID" value="ENSP00000393363.1"/>
    <property type="gene ID" value="ENSG00000100014.20"/>
</dbReference>
<dbReference type="Ensembl" id="ENST00000541492.1">
    <molecule id="Q69YQ0-2"/>
    <property type="protein sequence ID" value="ENSP00000439633.1"/>
    <property type="gene ID" value="ENSG00000100014.20"/>
</dbReference>
<dbReference type="GeneID" id="23384"/>
<dbReference type="KEGG" id="hsa:23384"/>
<dbReference type="MANE-Select" id="ENST00000314328.14">
    <property type="protein sequence ID" value="ENSP00000325785.8"/>
    <property type="RefSeq nucleotide sequence ID" value="NM_015330.6"/>
    <property type="RefSeq protein sequence ID" value="NP_056145.5"/>
</dbReference>
<dbReference type="UCSC" id="uc002zzv.6">
    <molecule id="Q69YQ0-1"/>
    <property type="organism name" value="human"/>
</dbReference>
<dbReference type="AGR" id="HGNC:29022"/>
<dbReference type="CTD" id="23384"/>
<dbReference type="DisGeNET" id="23384"/>
<dbReference type="GeneCards" id="SPECC1L"/>
<dbReference type="HGNC" id="HGNC:29022">
    <property type="gene designation" value="SPECC1L"/>
</dbReference>
<dbReference type="HPA" id="ENSG00000100014">
    <property type="expression patterns" value="Low tissue specificity"/>
</dbReference>
<dbReference type="MalaCards" id="SPECC1L"/>
<dbReference type="MIM" id="145420">
    <property type="type" value="phenotype"/>
</dbReference>
<dbReference type="MIM" id="600251">
    <property type="type" value="phenotype"/>
</dbReference>
<dbReference type="MIM" id="614140">
    <property type="type" value="gene"/>
</dbReference>
<dbReference type="neXtProt" id="NX_Q69YQ0"/>
<dbReference type="OpenTargets" id="ENSG00000100014"/>
<dbReference type="Orphanet" id="1519">
    <property type="disease" value="SPECC1L-related hypertelorism syndrome"/>
</dbReference>
<dbReference type="Orphanet" id="141258">
    <property type="disease" value="Tessier number 4 facial cleft"/>
</dbReference>
<dbReference type="Orphanet" id="141276">
    <property type="disease" value="Tessier number 7 facial cleft"/>
</dbReference>
<dbReference type="PharmGKB" id="PA164718673"/>
<dbReference type="VEuPathDB" id="HostDB:ENSG00000100014"/>
<dbReference type="eggNOG" id="KOG4678">
    <property type="taxonomic scope" value="Eukaryota"/>
</dbReference>
<dbReference type="GeneTree" id="ENSGT00940000153592"/>
<dbReference type="HOGENOM" id="CLU_009328_1_0_1"/>
<dbReference type="InParanoid" id="Q69YQ0"/>
<dbReference type="OMA" id="AMNSVET"/>
<dbReference type="OrthoDB" id="21607at2759"/>
<dbReference type="PAN-GO" id="Q69YQ0">
    <property type="GO annotations" value="3 GO annotations based on evolutionary models"/>
</dbReference>
<dbReference type="PhylomeDB" id="Q69YQ0"/>
<dbReference type="TreeFam" id="TF316716"/>
<dbReference type="PathwayCommons" id="Q69YQ0"/>
<dbReference type="SignaLink" id="Q69YQ0"/>
<dbReference type="BioGRID-ORCS" id="23384">
    <property type="hits" value="24 hits in 1149 CRISPR screens"/>
</dbReference>
<dbReference type="CD-CODE" id="DEE660B4">
    <property type="entry name" value="Stress granule"/>
</dbReference>
<dbReference type="GenomeRNAi" id="23384"/>
<dbReference type="Pharos" id="Q69YQ0">
    <property type="development level" value="Tbio"/>
</dbReference>
<dbReference type="PRO" id="PR:Q69YQ0"/>
<dbReference type="Proteomes" id="UP000005640">
    <property type="component" value="Chromosome 22"/>
</dbReference>
<dbReference type="RNAct" id="Q69YQ0">
    <property type="molecule type" value="protein"/>
</dbReference>
<dbReference type="Bgee" id="ENSG00000100014">
    <property type="expression patterns" value="Expressed in calcaneal tendon and 186 other cell types or tissues"/>
</dbReference>
<dbReference type="ExpressionAtlas" id="Q69YQ0">
    <property type="expression patterns" value="baseline and differential"/>
</dbReference>
<dbReference type="GO" id="GO:0015629">
    <property type="term" value="C:actin cytoskeleton"/>
    <property type="evidence" value="ECO:0000314"/>
    <property type="project" value="HPA"/>
</dbReference>
<dbReference type="GO" id="GO:0005737">
    <property type="term" value="C:cytoplasm"/>
    <property type="evidence" value="ECO:0007669"/>
    <property type="project" value="UniProtKB-KW"/>
</dbReference>
<dbReference type="GO" id="GO:0031941">
    <property type="term" value="C:filamentous actin"/>
    <property type="evidence" value="ECO:0000318"/>
    <property type="project" value="GO_Central"/>
</dbReference>
<dbReference type="GO" id="GO:0005921">
    <property type="term" value="C:gap junction"/>
    <property type="evidence" value="ECO:0007669"/>
    <property type="project" value="UniProtKB-SubCell"/>
</dbReference>
<dbReference type="GO" id="GO:0005815">
    <property type="term" value="C:microtubule organizing center"/>
    <property type="evidence" value="ECO:0000318"/>
    <property type="project" value="GO_Central"/>
</dbReference>
<dbReference type="GO" id="GO:0005819">
    <property type="term" value="C:spindle"/>
    <property type="evidence" value="ECO:0007669"/>
    <property type="project" value="UniProtKB-SubCell"/>
</dbReference>
<dbReference type="GO" id="GO:0008013">
    <property type="term" value="F:beta-catenin binding"/>
    <property type="evidence" value="ECO:0007669"/>
    <property type="project" value="Ensembl"/>
</dbReference>
<dbReference type="GO" id="GO:0030036">
    <property type="term" value="P:actin cytoskeleton organization"/>
    <property type="evidence" value="ECO:0000318"/>
    <property type="project" value="GO_Central"/>
</dbReference>
<dbReference type="GO" id="GO:0034332">
    <property type="term" value="P:adherens junction organization"/>
    <property type="evidence" value="ECO:0007669"/>
    <property type="project" value="Ensembl"/>
</dbReference>
<dbReference type="GO" id="GO:0061713">
    <property type="term" value="P:anterior neural tube closure"/>
    <property type="evidence" value="ECO:0007669"/>
    <property type="project" value="Ensembl"/>
</dbReference>
<dbReference type="GO" id="GO:0007155">
    <property type="term" value="P:cell adhesion"/>
    <property type="evidence" value="ECO:0000314"/>
    <property type="project" value="MGI"/>
</dbReference>
<dbReference type="GO" id="GO:0051301">
    <property type="term" value="P:cell division"/>
    <property type="evidence" value="ECO:0007669"/>
    <property type="project" value="UniProtKB-KW"/>
</dbReference>
<dbReference type="GO" id="GO:0016477">
    <property type="term" value="P:cell migration"/>
    <property type="evidence" value="ECO:0007669"/>
    <property type="project" value="Ensembl"/>
</dbReference>
<dbReference type="GO" id="GO:0030835">
    <property type="term" value="P:negative regulation of actin filament depolymerization"/>
    <property type="evidence" value="ECO:0007669"/>
    <property type="project" value="Ensembl"/>
</dbReference>
<dbReference type="GO" id="GO:0007026">
    <property type="term" value="P:negative regulation of microtubule depolymerization"/>
    <property type="evidence" value="ECO:0007669"/>
    <property type="project" value="Ensembl"/>
</dbReference>
<dbReference type="GO" id="GO:0036032">
    <property type="term" value="P:neural crest cell delamination"/>
    <property type="evidence" value="ECO:0007669"/>
    <property type="project" value="Ensembl"/>
</dbReference>
<dbReference type="GO" id="GO:0051897">
    <property type="term" value="P:positive regulation of phosphatidylinositol 3-kinase/protein kinase B signal transduction"/>
    <property type="evidence" value="ECO:0007669"/>
    <property type="project" value="Ensembl"/>
</dbReference>
<dbReference type="CDD" id="cd21199">
    <property type="entry name" value="CH_CYTS"/>
    <property type="match status" value="1"/>
</dbReference>
<dbReference type="FunFam" id="1.10.418.10:FF:000020">
    <property type="entry name" value="Cytospin-A isoform 1"/>
    <property type="match status" value="1"/>
</dbReference>
<dbReference type="Gene3D" id="1.10.418.10">
    <property type="entry name" value="Calponin-like domain"/>
    <property type="match status" value="1"/>
</dbReference>
<dbReference type="InterPro" id="IPR001715">
    <property type="entry name" value="CH_dom"/>
</dbReference>
<dbReference type="InterPro" id="IPR036872">
    <property type="entry name" value="CH_dom_sf"/>
</dbReference>
<dbReference type="InterPro" id="IPR050540">
    <property type="entry name" value="F-actin_Monoox_Mical"/>
</dbReference>
<dbReference type="PANTHER" id="PTHR23167">
    <property type="entry name" value="CALPONIN HOMOLOGY DOMAIN-CONTAINING PROTEIN DDB_G0272472-RELATED"/>
    <property type="match status" value="1"/>
</dbReference>
<dbReference type="PANTHER" id="PTHR23167:SF18">
    <property type="entry name" value="CYTOSPIN-A"/>
    <property type="match status" value="1"/>
</dbReference>
<dbReference type="Pfam" id="PF00307">
    <property type="entry name" value="CH"/>
    <property type="match status" value="1"/>
</dbReference>
<dbReference type="SMART" id="SM00033">
    <property type="entry name" value="CH"/>
    <property type="match status" value="1"/>
</dbReference>
<dbReference type="SUPFAM" id="SSF47576">
    <property type="entry name" value="Calponin-homology domain, CH-domain"/>
    <property type="match status" value="1"/>
</dbReference>
<dbReference type="PROSITE" id="PS50021">
    <property type="entry name" value="CH"/>
    <property type="match status" value="1"/>
</dbReference>
<organism>
    <name type="scientific">Homo sapiens</name>
    <name type="common">Human</name>
    <dbReference type="NCBI Taxonomy" id="9606"/>
    <lineage>
        <taxon>Eukaryota</taxon>
        <taxon>Metazoa</taxon>
        <taxon>Chordata</taxon>
        <taxon>Craniata</taxon>
        <taxon>Vertebrata</taxon>
        <taxon>Euteleostomi</taxon>
        <taxon>Mammalia</taxon>
        <taxon>Eutheria</taxon>
        <taxon>Euarchontoglires</taxon>
        <taxon>Primates</taxon>
        <taxon>Haplorrhini</taxon>
        <taxon>Catarrhini</taxon>
        <taxon>Hominidae</taxon>
        <taxon>Homo</taxon>
    </lineage>
</organism>
<keyword id="KW-0025">Alternative splicing</keyword>
<keyword id="KW-0131">Cell cycle</keyword>
<keyword id="KW-0132">Cell division</keyword>
<keyword id="KW-0965">Cell junction</keyword>
<keyword id="KW-0175">Coiled coil</keyword>
<keyword id="KW-0963">Cytoplasm</keyword>
<keyword id="KW-0206">Cytoskeleton</keyword>
<keyword id="KW-0225">Disease variant</keyword>
<keyword id="KW-0303">Gap junction</keyword>
<keyword id="KW-0597">Phosphoprotein</keyword>
<keyword id="KW-1267">Proteomics identification</keyword>
<keyword id="KW-1185">Reference proteome</keyword>
<comment type="function">
    <text evidence="7">Involved in cytokinesis and spindle organization. May play a role in actin cytoskeleton organization and microtubule stabilization and hence required for proper cell adhesion and migration.</text>
</comment>
<comment type="subunit">
    <text>May interact with both microtubules and actin cytoskeleton.</text>
</comment>
<comment type="interaction">
    <interactant intactId="EBI-351113">
        <id>Q69YQ0</id>
    </interactant>
    <interactant intactId="EBI-11958551">
        <id>Q8N7B9-2</id>
        <label>EFCAB3</label>
    </interactant>
    <organismsDiffer>false</organismsDiffer>
    <experiments>3</experiments>
</comment>
<comment type="interaction">
    <interactant intactId="EBI-351113">
        <id>Q69YQ0</id>
    </interactant>
    <interactant intactId="EBI-742350">
        <id>Q14241</id>
        <label>ELOA</label>
    </interactant>
    <organismsDiffer>false</organismsDiffer>
    <experiments>3</experiments>
</comment>
<comment type="interaction">
    <interactant intactId="EBI-351113">
        <id>Q69YQ0</id>
    </interactant>
    <interactant intactId="EBI-751757">
        <id>Q7L622</id>
        <label>G2E3</label>
    </interactant>
    <organismsDiffer>false</organismsDiffer>
    <experiments>2</experiments>
</comment>
<comment type="interaction">
    <interactant intactId="EBI-351113">
        <id>Q69YQ0</id>
    </interactant>
    <interactant intactId="EBI-721802">
        <id>Q9BZL4</id>
        <label>PPP1R12C</label>
    </interactant>
    <organismsDiffer>false</organismsDiffer>
    <experiments>3</experiments>
</comment>
<comment type="interaction">
    <interactant intactId="EBI-351113">
        <id>Q69YQ0</id>
    </interactant>
    <interactant intactId="EBI-632715">
        <id>Q13573</id>
        <label>SNW1</label>
    </interactant>
    <organismsDiffer>false</organismsDiffer>
    <experiments>3</experiments>
</comment>
<comment type="interaction">
    <interactant intactId="EBI-351113">
        <id>Q69YQ0</id>
    </interactant>
    <interactant intactId="EBI-10237226">
        <id>Q15911-2</id>
        <label>ZFHX3</label>
    </interactant>
    <organismsDiffer>false</organismsDiffer>
    <experiments>3</experiments>
</comment>
<comment type="interaction">
    <interactant intactId="EBI-351113">
        <id>Q69YQ0</id>
    </interactant>
    <interactant intactId="EBI-10177272">
        <id>P15622-3</id>
        <label>ZNF250</label>
    </interactant>
    <organismsDiffer>false</organismsDiffer>
    <experiments>3</experiments>
</comment>
<comment type="subcellular location">
    <subcellularLocation>
        <location evidence="7">Cytoplasm</location>
        <location evidence="7">Cytoskeleton</location>
    </subcellularLocation>
    <subcellularLocation>
        <location evidence="7">Cytoplasm</location>
        <location evidence="7">Cytoskeleton</location>
        <location evidence="7">Spindle</location>
    </subcellularLocation>
    <subcellularLocation>
        <location evidence="7">Cell junction</location>
        <location evidence="7">Gap junction</location>
    </subcellularLocation>
    <text>Colocalizes with acetylated alpha-tubulin, gamma-tubulin and F-actin. Also observed in a ring around gamma-tubulin containing centrioles possibly in the microtubule organizing center.</text>
</comment>
<comment type="alternative products">
    <event type="alternative splicing"/>
    <isoform>
        <id>Q69YQ0-1</id>
        <name>1</name>
        <sequence type="displayed"/>
    </isoform>
    <isoform>
        <id>Q69YQ0-2</id>
        <name>2</name>
        <sequence type="described" ref="VSP_047359"/>
    </isoform>
</comment>
<comment type="disease" evidence="7">
    <disease id="DI-03222">
        <name>Facial clefting, oblique, 1</name>
        <acronym>OBLFC1</acronym>
        <description>A rare form of facial clefting. A facial cleft is any of the fissures between the embryonic prominences that normally unite to form the face.</description>
        <dbReference type="MIM" id="600251"/>
    </disease>
    <text>The disease may be caused by variants affecting the gene represented in this entry.</text>
</comment>
<comment type="disease" evidence="8 9">
    <disease id="DI-05364">
        <name>Teebi hypertelorism syndrome 1</name>
        <acronym>TBHS1</acronym>
        <description>A form of Teebi hypertelorism syndrome, a syndrome characterized by an abnormally increased distance between ocular orbits, and facial features that can resemble craniofrontonasal dysplasia such as prominent forehead, widow's peak, heavy and broad eyebrows, long palpebral fissures, ptosis, high and broad nasal bridge, short nose, low-set ears, natal teeth, thin upper lip and a grooved chin. Some affected individuals have limb, urogenital, umbilical and cardiac defects. Developmental delay and/or impaired intellectual development have been observed in some patients. TBHS1 inheritance is autosomal dominant.</description>
        <dbReference type="MIM" id="145420"/>
    </disease>
    <text>The disease is caused by variants affecting the gene represented in this entry.</text>
</comment>
<comment type="similarity">
    <text evidence="13">Belongs to the cytospin-A family.</text>
</comment>
<protein>
    <recommendedName>
        <fullName>Cytospin-A</fullName>
    </recommendedName>
    <alternativeName>
        <fullName>Renal carcinoma antigen NY-REN-22</fullName>
    </alternativeName>
    <alternativeName>
        <fullName>Sperm antigen with calponin homology and coiled-coil domains 1-like</fullName>
        <shortName>SPECC1-like protein</shortName>
    </alternativeName>
</protein>
<gene>
    <name type="primary">SPECC1L</name>
    <name type="synonym">CYTSA</name>
    <name type="synonym">KIAA0376</name>
</gene>
<name>CYTSA_HUMAN</name>
<accession>Q69YQ0</accession>
<accession>B7Z758</accession>
<accession>F5H1H6</accession>
<accession>O15081</accession>
<feature type="chain" id="PRO_0000231018" description="Cytospin-A">
    <location>
        <begin position="1"/>
        <end position="1117"/>
    </location>
</feature>
<feature type="domain" description="Calponin-homology (CH)" evidence="3">
    <location>
        <begin position="1011"/>
        <end position="1116"/>
    </location>
</feature>
<feature type="region of interest" description="Disordered" evidence="4">
    <location>
        <begin position="1"/>
        <end position="176"/>
    </location>
</feature>
<feature type="region of interest" description="Disordered" evidence="4">
    <location>
        <begin position="293"/>
        <end position="323"/>
    </location>
</feature>
<feature type="region of interest" description="Disordered" evidence="4">
    <location>
        <begin position="358"/>
        <end position="390"/>
    </location>
</feature>
<feature type="region of interest" description="Disordered" evidence="4">
    <location>
        <begin position="920"/>
        <end position="997"/>
    </location>
</feature>
<feature type="coiled-coil region" evidence="2">
    <location>
        <begin position="168"/>
        <end position="280"/>
    </location>
</feature>
<feature type="coiled-coil region" evidence="2">
    <location>
        <begin position="394"/>
        <end position="449"/>
    </location>
</feature>
<feature type="coiled-coil region" evidence="2">
    <location>
        <begin position="487"/>
        <end position="807"/>
    </location>
</feature>
<feature type="compositionally biased region" description="Low complexity" evidence="4">
    <location>
        <begin position="45"/>
        <end position="90"/>
    </location>
</feature>
<feature type="compositionally biased region" description="Polar residues" evidence="4">
    <location>
        <begin position="93"/>
        <end position="117"/>
    </location>
</feature>
<feature type="compositionally biased region" description="Basic and acidic residues" evidence="4">
    <location>
        <begin position="120"/>
        <end position="131"/>
    </location>
</feature>
<feature type="compositionally biased region" description="Basic and acidic residues" evidence="4">
    <location>
        <begin position="158"/>
        <end position="171"/>
    </location>
</feature>
<feature type="compositionally biased region" description="Polar residues" evidence="4">
    <location>
        <begin position="293"/>
        <end position="303"/>
    </location>
</feature>
<feature type="compositionally biased region" description="Low complexity" evidence="4">
    <location>
        <begin position="358"/>
        <end position="377"/>
    </location>
</feature>
<feature type="compositionally biased region" description="Basic and acidic residues" evidence="4">
    <location>
        <begin position="946"/>
        <end position="956"/>
    </location>
</feature>
<feature type="compositionally biased region" description="Low complexity" evidence="4">
    <location>
        <begin position="971"/>
        <end position="990"/>
    </location>
</feature>
<feature type="modified residue" description="Phosphoserine" evidence="1">
    <location>
        <position position="384"/>
    </location>
</feature>
<feature type="modified residue" description="Phosphoserine" evidence="1">
    <location>
        <position position="385"/>
    </location>
</feature>
<feature type="modified residue" description="Phosphoserine" evidence="1">
    <location>
        <position position="389"/>
    </location>
</feature>
<feature type="modified residue" description="Phosphoserine" evidence="15">
    <location>
        <position position="868"/>
    </location>
</feature>
<feature type="modified residue" description="Phosphoserine" evidence="14 15 16">
    <location>
        <position position="881"/>
    </location>
</feature>
<feature type="modified residue" description="Phosphoserine" evidence="16 17">
    <location>
        <position position="887"/>
    </location>
</feature>
<feature type="splice variant" id="VSP_047359" description="In isoform 2." evidence="12">
    <location>
        <begin position="1030"/>
        <end position="1068"/>
    </location>
</feature>
<feature type="sequence variant" id="VAR_066872" description="No effect on the stabilization of microtubules; dbSNP:rs142144652." evidence="7">
    <original>T</original>
    <variation>M</variation>
    <location>
        <position position="190"/>
    </location>
</feature>
<feature type="sequence variant" id="VAR_060448" description="In dbSNP:rs204710.">
    <original>G</original>
    <variation>D</variation>
    <location>
        <position position="301"/>
    </location>
</feature>
<feature type="sequence variant" id="VAR_073384" description="In TBHS1; has an abnormal punctate expression pattern; has a drastically reduced ability to stabilize microtubules; dbSNP:rs786201030." evidence="8">
    <original>T</original>
    <variation>P</variation>
    <location>
        <position position="397"/>
    </location>
</feature>
<feature type="sequence variant" id="VAR_081478" description="In TBHS1; uncertain significance." evidence="9">
    <location>
        <begin position="400"/>
        <end position="401"/>
    </location>
</feature>
<feature type="sequence variant" id="VAR_066873" description="In OBLFC1; severely impairs the stabilization of microtubules; dbSNP:rs387907108." evidence="7">
    <original>Q</original>
    <variation>P</variation>
    <location>
        <position position="415"/>
    </location>
</feature>
<feature type="sequence variant" id="VAR_081479" description="In TBHS1; uncertain significance." evidence="9">
    <original>E</original>
    <variation>D</variation>
    <location>
        <position position="420"/>
    </location>
</feature>
<feature type="sequence variant" id="VAR_060449" description="In dbSNP:rs5760340.">
    <original>S</original>
    <variation>F</variation>
    <location>
        <position position="712"/>
    </location>
</feature>
<feature type="sequence variant" id="VAR_060450" description="In dbSNP:rs6004132.">
    <original>T</original>
    <variation>A</variation>
    <location>
        <position position="717"/>
    </location>
</feature>
<feature type="sequence variant" id="VAR_060451" description="In dbSNP:rs11704759.">
    <original>V</original>
    <variation>A</variation>
    <location>
        <position position="943"/>
    </location>
</feature>
<feature type="sequence variant" id="VAR_060452" description="In dbSNP:rs204718." evidence="5 6 10 11">
    <original>V</original>
    <variation>M</variation>
    <location>
        <position position="951"/>
    </location>
</feature>
<feature type="sequence variant" id="VAR_073385" description="In TBHS1; has an abnormal punctate expression pattern; has a drastically reduced ability to stabilize microtubules; dbSNP:rs786201031." evidence="8">
    <original>G</original>
    <variation>S</variation>
    <location>
        <position position="1083"/>
    </location>
</feature>
<feature type="sequence conflict" description="In Ref. 1; AAX84184 and 2; CAH10609." evidence="13" ref="1 2">
    <original>P</original>
    <variation>L</variation>
    <location>
        <position position="375"/>
    </location>
</feature>
<feature type="sequence conflict" description="In Ref. 4; BAA21574." evidence="13" ref="4">
    <original>N</original>
    <variation>K</variation>
    <location>
        <position position="1041"/>
    </location>
</feature>
<evidence type="ECO:0000250" key="1">
    <source>
        <dbReference type="UniProtKB" id="Q2KN98"/>
    </source>
</evidence>
<evidence type="ECO:0000255" key="2"/>
<evidence type="ECO:0000255" key="3">
    <source>
        <dbReference type="PROSITE-ProRule" id="PRU00044"/>
    </source>
</evidence>
<evidence type="ECO:0000256" key="4">
    <source>
        <dbReference type="SAM" id="MobiDB-lite"/>
    </source>
</evidence>
<evidence type="ECO:0000269" key="5">
    <source>
    </source>
</evidence>
<evidence type="ECO:0000269" key="6">
    <source>
    </source>
</evidence>
<evidence type="ECO:0000269" key="7">
    <source>
    </source>
</evidence>
<evidence type="ECO:0000269" key="8">
    <source>
    </source>
</evidence>
<evidence type="ECO:0000269" key="9">
    <source>
    </source>
</evidence>
<evidence type="ECO:0000269" key="10">
    <source>
    </source>
</evidence>
<evidence type="ECO:0000269" key="11">
    <source ref="1"/>
</evidence>
<evidence type="ECO:0000303" key="12">
    <source>
    </source>
</evidence>
<evidence type="ECO:0000305" key="13"/>
<evidence type="ECO:0007744" key="14">
    <source>
    </source>
</evidence>
<evidence type="ECO:0007744" key="15">
    <source>
    </source>
</evidence>
<evidence type="ECO:0007744" key="16">
    <source>
    </source>
</evidence>
<evidence type="ECO:0007744" key="17">
    <source>
    </source>
</evidence>
<proteinExistence type="evidence at protein level"/>
<reference key="1">
    <citation type="submission" date="2005-01" db="EMBL/GenBank/DDBJ databases">
        <title>Characterization of cytospin A as a multiple coiled coil protein involved in cytokinesis and spindle organization.</title>
        <authorList>
            <person name="Huang C.-H."/>
            <person name="Ye T."/>
            <person name="Chen Y."/>
        </authorList>
    </citation>
    <scope>NUCLEOTIDE SEQUENCE [MRNA] (ISOFORM 1)</scope>
    <scope>VARIANT MET-951</scope>
    <source>
        <tissue>Brain</tissue>
    </source>
</reference>
<reference key="2">
    <citation type="journal article" date="2004" name="Nat. Genet.">
        <title>Complete sequencing and characterization of 21,243 full-length human cDNAs.</title>
        <authorList>
            <person name="Ota T."/>
            <person name="Suzuki Y."/>
            <person name="Nishikawa T."/>
            <person name="Otsuki T."/>
            <person name="Sugiyama T."/>
            <person name="Irie R."/>
            <person name="Wakamatsu A."/>
            <person name="Hayashi K."/>
            <person name="Sato H."/>
            <person name="Nagai K."/>
            <person name="Kimura K."/>
            <person name="Makita H."/>
            <person name="Sekine M."/>
            <person name="Obayashi M."/>
            <person name="Nishi T."/>
            <person name="Shibahara T."/>
            <person name="Tanaka T."/>
            <person name="Ishii S."/>
            <person name="Yamamoto J."/>
            <person name="Saito K."/>
            <person name="Kawai Y."/>
            <person name="Isono Y."/>
            <person name="Nakamura Y."/>
            <person name="Nagahari K."/>
            <person name="Murakami K."/>
            <person name="Yasuda T."/>
            <person name="Iwayanagi T."/>
            <person name="Wagatsuma M."/>
            <person name="Shiratori A."/>
            <person name="Sudo H."/>
            <person name="Hosoiri T."/>
            <person name="Kaku Y."/>
            <person name="Kodaira H."/>
            <person name="Kondo H."/>
            <person name="Sugawara M."/>
            <person name="Takahashi M."/>
            <person name="Kanda K."/>
            <person name="Yokoi T."/>
            <person name="Furuya T."/>
            <person name="Kikkawa E."/>
            <person name="Omura Y."/>
            <person name="Abe K."/>
            <person name="Kamihara K."/>
            <person name="Katsuta N."/>
            <person name="Sato K."/>
            <person name="Tanikawa M."/>
            <person name="Yamazaki M."/>
            <person name="Ninomiya K."/>
            <person name="Ishibashi T."/>
            <person name="Yamashita H."/>
            <person name="Murakawa K."/>
            <person name="Fujimori K."/>
            <person name="Tanai H."/>
            <person name="Kimata M."/>
            <person name="Watanabe M."/>
            <person name="Hiraoka S."/>
            <person name="Chiba Y."/>
            <person name="Ishida S."/>
            <person name="Ono Y."/>
            <person name="Takiguchi S."/>
            <person name="Watanabe S."/>
            <person name="Yosida M."/>
            <person name="Hotuta T."/>
            <person name="Kusano J."/>
            <person name="Kanehori K."/>
            <person name="Takahashi-Fujii A."/>
            <person name="Hara H."/>
            <person name="Tanase T.-O."/>
            <person name="Nomura Y."/>
            <person name="Togiya S."/>
            <person name="Komai F."/>
            <person name="Hara R."/>
            <person name="Takeuchi K."/>
            <person name="Arita M."/>
            <person name="Imose N."/>
            <person name="Musashino K."/>
            <person name="Yuuki H."/>
            <person name="Oshima A."/>
            <person name="Sasaki N."/>
            <person name="Aotsuka S."/>
            <person name="Yoshikawa Y."/>
            <person name="Matsunawa H."/>
            <person name="Ichihara T."/>
            <person name="Shiohata N."/>
            <person name="Sano S."/>
            <person name="Moriya S."/>
            <person name="Momiyama H."/>
            <person name="Satoh N."/>
            <person name="Takami S."/>
            <person name="Terashima Y."/>
            <person name="Suzuki O."/>
            <person name="Nakagawa S."/>
            <person name="Senoh A."/>
            <person name="Mizoguchi H."/>
            <person name="Goto Y."/>
            <person name="Shimizu F."/>
            <person name="Wakebe H."/>
            <person name="Hishigaki H."/>
            <person name="Watanabe T."/>
            <person name="Sugiyama A."/>
            <person name="Takemoto M."/>
            <person name="Kawakami B."/>
            <person name="Yamazaki M."/>
            <person name="Watanabe K."/>
            <person name="Kumagai A."/>
            <person name="Itakura S."/>
            <person name="Fukuzumi Y."/>
            <person name="Fujimori Y."/>
            <person name="Komiyama M."/>
            <person name="Tashiro H."/>
            <person name="Tanigami A."/>
            <person name="Fujiwara T."/>
            <person name="Ono T."/>
            <person name="Yamada K."/>
            <person name="Fujii Y."/>
            <person name="Ozaki K."/>
            <person name="Hirao M."/>
            <person name="Ohmori Y."/>
            <person name="Kawabata A."/>
            <person name="Hikiji T."/>
            <person name="Kobatake N."/>
            <person name="Inagaki H."/>
            <person name="Ikema Y."/>
            <person name="Okamoto S."/>
            <person name="Okitani R."/>
            <person name="Kawakami T."/>
            <person name="Noguchi S."/>
            <person name="Itoh T."/>
            <person name="Shigeta K."/>
            <person name="Senba T."/>
            <person name="Matsumura K."/>
            <person name="Nakajima Y."/>
            <person name="Mizuno T."/>
            <person name="Morinaga M."/>
            <person name="Sasaki M."/>
            <person name="Togashi T."/>
            <person name="Oyama M."/>
            <person name="Hata H."/>
            <person name="Watanabe M."/>
            <person name="Komatsu T."/>
            <person name="Mizushima-Sugano J."/>
            <person name="Satoh T."/>
            <person name="Shirai Y."/>
            <person name="Takahashi Y."/>
            <person name="Nakagawa K."/>
            <person name="Okumura K."/>
            <person name="Nagase T."/>
            <person name="Nomura N."/>
            <person name="Kikuchi H."/>
            <person name="Masuho Y."/>
            <person name="Yamashita R."/>
            <person name="Nakai K."/>
            <person name="Yada T."/>
            <person name="Nakamura Y."/>
            <person name="Ohara O."/>
            <person name="Isogai T."/>
            <person name="Sugano S."/>
        </authorList>
    </citation>
    <scope>NUCLEOTIDE SEQUENCE [LARGE SCALE MRNA] (ISOFORM 2)</scope>
    <scope>VARIANT MET-951</scope>
    <source>
        <tissue>Synovium</tissue>
    </source>
</reference>
<reference key="3">
    <citation type="journal article" date="2007" name="BMC Genomics">
        <title>The full-ORF clone resource of the German cDNA consortium.</title>
        <authorList>
            <person name="Bechtel S."/>
            <person name="Rosenfelder H."/>
            <person name="Duda A."/>
            <person name="Schmidt C.P."/>
            <person name="Ernst U."/>
            <person name="Wellenreuther R."/>
            <person name="Mehrle A."/>
            <person name="Schuster C."/>
            <person name="Bahr A."/>
            <person name="Bloecker H."/>
            <person name="Heubner D."/>
            <person name="Hoerlein A."/>
            <person name="Michel G."/>
            <person name="Wedler H."/>
            <person name="Koehrer K."/>
            <person name="Ottenwaelder B."/>
            <person name="Poustka A."/>
            <person name="Wiemann S."/>
            <person name="Schupp I."/>
        </authorList>
    </citation>
    <scope>NUCLEOTIDE SEQUENCE [LARGE SCALE MRNA] (ISOFORM 1)</scope>
    <scope>VARIANT MET-951</scope>
    <source>
        <tissue>Melanoma</tissue>
    </source>
</reference>
<reference key="4">
    <citation type="journal article" date="1999" name="Nature">
        <title>The DNA sequence of human chromosome 22.</title>
        <authorList>
            <person name="Dunham I."/>
            <person name="Hunt A.R."/>
            <person name="Collins J.E."/>
            <person name="Bruskiewich R."/>
            <person name="Beare D.M."/>
            <person name="Clamp M."/>
            <person name="Smink L.J."/>
            <person name="Ainscough R."/>
            <person name="Almeida J.P."/>
            <person name="Babbage A.K."/>
            <person name="Bagguley C."/>
            <person name="Bailey J."/>
            <person name="Barlow K.F."/>
            <person name="Bates K.N."/>
            <person name="Beasley O.P."/>
            <person name="Bird C.P."/>
            <person name="Blakey S.E."/>
            <person name="Bridgeman A.M."/>
            <person name="Buck D."/>
            <person name="Burgess J."/>
            <person name="Burrill W.D."/>
            <person name="Burton J."/>
            <person name="Carder C."/>
            <person name="Carter N.P."/>
            <person name="Chen Y."/>
            <person name="Clark G."/>
            <person name="Clegg S.M."/>
            <person name="Cobley V.E."/>
            <person name="Cole C.G."/>
            <person name="Collier R.E."/>
            <person name="Connor R."/>
            <person name="Conroy D."/>
            <person name="Corby N.R."/>
            <person name="Coville G.J."/>
            <person name="Cox A.V."/>
            <person name="Davis J."/>
            <person name="Dawson E."/>
            <person name="Dhami P.D."/>
            <person name="Dockree C."/>
            <person name="Dodsworth S.J."/>
            <person name="Durbin R.M."/>
            <person name="Ellington A.G."/>
            <person name="Evans K.L."/>
            <person name="Fey J.M."/>
            <person name="Fleming K."/>
            <person name="French L."/>
            <person name="Garner A.A."/>
            <person name="Gilbert J.G.R."/>
            <person name="Goward M.E."/>
            <person name="Grafham D.V."/>
            <person name="Griffiths M.N.D."/>
            <person name="Hall C."/>
            <person name="Hall R.E."/>
            <person name="Hall-Tamlyn G."/>
            <person name="Heathcott R.W."/>
            <person name="Ho S."/>
            <person name="Holmes S."/>
            <person name="Hunt S.E."/>
            <person name="Jones M.C."/>
            <person name="Kershaw J."/>
            <person name="Kimberley A.M."/>
            <person name="King A."/>
            <person name="Laird G.K."/>
            <person name="Langford C.F."/>
            <person name="Leversha M.A."/>
            <person name="Lloyd C."/>
            <person name="Lloyd D.M."/>
            <person name="Martyn I.D."/>
            <person name="Mashreghi-Mohammadi M."/>
            <person name="Matthews L.H."/>
            <person name="Mccann O.T."/>
            <person name="Mcclay J."/>
            <person name="Mclaren S."/>
            <person name="McMurray A.A."/>
            <person name="Milne S.A."/>
            <person name="Mortimore B.J."/>
            <person name="Odell C.N."/>
            <person name="Pavitt R."/>
            <person name="Pearce A.V."/>
            <person name="Pearson D."/>
            <person name="Phillimore B.J.C.T."/>
            <person name="Phillips S.H."/>
            <person name="Plumb R.W."/>
            <person name="Ramsay H."/>
            <person name="Ramsey Y."/>
            <person name="Rogers L."/>
            <person name="Ross M.T."/>
            <person name="Scott C.E."/>
            <person name="Sehra H.K."/>
            <person name="Skuce C.D."/>
            <person name="Smalley S."/>
            <person name="Smith M.L."/>
            <person name="Soderlund C."/>
            <person name="Spragon L."/>
            <person name="Steward C.A."/>
            <person name="Sulston J.E."/>
            <person name="Swann R.M."/>
            <person name="Vaudin M."/>
            <person name="Wall M."/>
            <person name="Wallis J.M."/>
            <person name="Whiteley M.N."/>
            <person name="Willey D.L."/>
            <person name="Williams L."/>
            <person name="Williams S.A."/>
            <person name="Williamson H."/>
            <person name="Wilmer T.E."/>
            <person name="Wilming L."/>
            <person name="Wright C.L."/>
            <person name="Hubbard T."/>
            <person name="Bentley D.R."/>
            <person name="Beck S."/>
            <person name="Rogers J."/>
            <person name="Shimizu N."/>
            <person name="Minoshima S."/>
            <person name="Kawasaki K."/>
            <person name="Sasaki T."/>
            <person name="Asakawa S."/>
            <person name="Kudoh J."/>
            <person name="Shintani A."/>
            <person name="Shibuya K."/>
            <person name="Yoshizaki Y."/>
            <person name="Aoki N."/>
            <person name="Mitsuyama S."/>
            <person name="Roe B.A."/>
            <person name="Chen F."/>
            <person name="Chu L."/>
            <person name="Crabtree J."/>
            <person name="Deschamps S."/>
            <person name="Do A."/>
            <person name="Do T."/>
            <person name="Dorman A."/>
            <person name="Fang F."/>
            <person name="Fu Y."/>
            <person name="Hu P."/>
            <person name="Hua A."/>
            <person name="Kenton S."/>
            <person name="Lai H."/>
            <person name="Lao H.I."/>
            <person name="Lewis J."/>
            <person name="Lewis S."/>
            <person name="Lin S.-P."/>
            <person name="Loh P."/>
            <person name="Malaj E."/>
            <person name="Nguyen T."/>
            <person name="Pan H."/>
            <person name="Phan S."/>
            <person name="Qi S."/>
            <person name="Qian Y."/>
            <person name="Ray L."/>
            <person name="Ren Q."/>
            <person name="Shaull S."/>
            <person name="Sloan D."/>
            <person name="Song L."/>
            <person name="Wang Q."/>
            <person name="Wang Y."/>
            <person name="Wang Z."/>
            <person name="White J."/>
            <person name="Willingham D."/>
            <person name="Wu H."/>
            <person name="Yao Z."/>
            <person name="Zhan M."/>
            <person name="Zhang G."/>
            <person name="Chissoe S."/>
            <person name="Murray J."/>
            <person name="Miller N."/>
            <person name="Minx P."/>
            <person name="Fulton R."/>
            <person name="Johnson D."/>
            <person name="Bemis G."/>
            <person name="Bentley D."/>
            <person name="Bradshaw H."/>
            <person name="Bourne S."/>
            <person name="Cordes M."/>
            <person name="Du Z."/>
            <person name="Fulton L."/>
            <person name="Goela D."/>
            <person name="Graves T."/>
            <person name="Hawkins J."/>
            <person name="Hinds K."/>
            <person name="Kemp K."/>
            <person name="Latreille P."/>
            <person name="Layman D."/>
            <person name="Ozersky P."/>
            <person name="Rohlfing T."/>
            <person name="Scheet P."/>
            <person name="Walker C."/>
            <person name="Wamsley A."/>
            <person name="Wohldmann P."/>
            <person name="Pepin K."/>
            <person name="Nelson J."/>
            <person name="Korf I."/>
            <person name="Bedell J.A."/>
            <person name="Hillier L.W."/>
            <person name="Mardis E."/>
            <person name="Waterston R."/>
            <person name="Wilson R."/>
            <person name="Emanuel B.S."/>
            <person name="Shaikh T."/>
            <person name="Kurahashi H."/>
            <person name="Saitta S."/>
            <person name="Budarf M.L."/>
            <person name="McDermid H.E."/>
            <person name="Johnson A."/>
            <person name="Wong A.C.C."/>
            <person name="Morrow B.E."/>
            <person name="Edelmann L."/>
            <person name="Kim U.J."/>
            <person name="Shizuya H."/>
            <person name="Simon M.I."/>
            <person name="Dumanski J.P."/>
            <person name="Peyrard M."/>
            <person name="Kedra D."/>
            <person name="Seroussi E."/>
            <person name="Fransson I."/>
            <person name="Tapia I."/>
            <person name="Bruder C.E."/>
            <person name="O'Brien K.P."/>
            <person name="Wilkinson P."/>
            <person name="Bodenteich A."/>
            <person name="Hartman K."/>
            <person name="Hu X."/>
            <person name="Khan A.S."/>
            <person name="Lane L."/>
            <person name="Tilahun Y."/>
            <person name="Wright H."/>
        </authorList>
    </citation>
    <scope>NUCLEOTIDE SEQUENCE [LARGE SCALE GENOMIC DNA]</scope>
</reference>
<reference key="5">
    <citation type="journal article" date="1997" name="DNA Res.">
        <title>Prediction of the coding sequences of unidentified human genes. VII. The complete sequences of 100 new cDNA clones from brain which can code for large proteins in vitro.</title>
        <authorList>
            <person name="Nagase T."/>
            <person name="Ishikawa K."/>
            <person name="Nakajima D."/>
            <person name="Ohira M."/>
            <person name="Seki N."/>
            <person name="Miyajima N."/>
            <person name="Tanaka A."/>
            <person name="Kotani H."/>
            <person name="Nomura N."/>
            <person name="Ohara O."/>
        </authorList>
    </citation>
    <scope>NUCLEOTIDE SEQUENCE [LARGE SCALE MRNA] OF 157-1041 (ISOFORM 1)</scope>
    <scope>VARIANT MET-951</scope>
    <source>
        <tissue>Brain</tissue>
    </source>
</reference>
<reference key="6">
    <citation type="journal article" date="1999" name="Int. J. Cancer">
        <title>Antigens recognized by autologous antibody in patients with renal-cell carcinoma.</title>
        <authorList>
            <person name="Scanlan M.J."/>
            <person name="Gordan J.D."/>
            <person name="Williamson B."/>
            <person name="Stockert E."/>
            <person name="Bander N.H."/>
            <person name="Jongeneel C.V."/>
            <person name="Gure A.O."/>
            <person name="Jaeger D."/>
            <person name="Jaeger E."/>
            <person name="Knuth A."/>
            <person name="Chen Y.-T."/>
            <person name="Old L.J."/>
        </authorList>
    </citation>
    <scope>IDENTIFICATION AS A RENAL CANCER ANTIGEN</scope>
    <source>
        <tissue>Renal cell carcinoma</tissue>
    </source>
</reference>
<reference key="7">
    <citation type="journal article" date="2008" name="J. Proteome Res.">
        <title>Combining protein-based IMAC, peptide-based IMAC, and MudPIT for efficient phosphoproteomic analysis.</title>
        <authorList>
            <person name="Cantin G.T."/>
            <person name="Yi W."/>
            <person name="Lu B."/>
            <person name="Park S.K."/>
            <person name="Xu T."/>
            <person name="Lee J.-D."/>
            <person name="Yates J.R. III"/>
        </authorList>
    </citation>
    <scope>PHOSPHORYLATION [LARGE SCALE ANALYSIS] AT SER-881</scope>
    <scope>IDENTIFICATION BY MASS SPECTROMETRY [LARGE SCALE ANALYSIS]</scope>
    <source>
        <tissue>Cervix carcinoma</tissue>
    </source>
</reference>
<reference key="8">
    <citation type="journal article" date="2008" name="Proc. Natl. Acad. Sci. U.S.A.">
        <title>A quantitative atlas of mitotic phosphorylation.</title>
        <authorList>
            <person name="Dephoure N."/>
            <person name="Zhou C."/>
            <person name="Villen J."/>
            <person name="Beausoleil S.A."/>
            <person name="Bakalarski C.E."/>
            <person name="Elledge S.J."/>
            <person name="Gygi S.P."/>
        </authorList>
    </citation>
    <scope>PHOSPHORYLATION [LARGE SCALE ANALYSIS] AT SER-868 AND SER-881</scope>
    <scope>IDENTIFICATION BY MASS SPECTROMETRY [LARGE SCALE ANALYSIS]</scope>
    <source>
        <tissue>Cervix carcinoma</tissue>
    </source>
</reference>
<reference key="9">
    <citation type="journal article" date="2010" name="Sci. Signal.">
        <title>Quantitative phosphoproteomics reveals widespread full phosphorylation site occupancy during mitosis.</title>
        <authorList>
            <person name="Olsen J.V."/>
            <person name="Vermeulen M."/>
            <person name="Santamaria A."/>
            <person name="Kumar C."/>
            <person name="Miller M.L."/>
            <person name="Jensen L.J."/>
            <person name="Gnad F."/>
            <person name="Cox J."/>
            <person name="Jensen T.S."/>
            <person name="Nigg E.A."/>
            <person name="Brunak S."/>
            <person name="Mann M."/>
        </authorList>
    </citation>
    <scope>IDENTIFICATION BY MASS SPECTROMETRY [LARGE SCALE ANALYSIS]</scope>
    <source>
        <tissue>Cervix carcinoma</tissue>
    </source>
</reference>
<reference key="10">
    <citation type="journal article" date="2011" name="Am. J. Hum. Genet.">
        <title>Deficiency of the cytoskeletal protein SPECC1L leads to oblique facial clefting.</title>
        <authorList>
            <person name="Saadi I."/>
            <person name="Alkuraya F.S."/>
            <person name="Gisselbrecht S.S."/>
            <person name="Goessling W."/>
            <person name="Cavallesco R."/>
            <person name="Turbe-Doan A."/>
            <person name="Petrin A.L."/>
            <person name="Harris J."/>
            <person name="Siddiqui U."/>
            <person name="Grix A.W. Jr."/>
            <person name="Hove H.D."/>
            <person name="Leboulch P."/>
            <person name="Glover T.W."/>
            <person name="Morton C.C."/>
            <person name="Richieri-Costa A."/>
            <person name="Murray J.C."/>
            <person name="Erickson R.P."/>
            <person name="Maas R.L."/>
        </authorList>
    </citation>
    <scope>FUNCTION</scope>
    <scope>INTERACTION WITH MICROTUBULES AND ACTIN CYTOSKELETON</scope>
    <scope>SUBCELLULAR LOCATION</scope>
    <scope>VARIANT OBLFC1 PRO-415</scope>
    <scope>VARIANT MET-190</scope>
</reference>
<reference key="11">
    <citation type="journal article" date="2013" name="J. Proteome Res.">
        <title>Toward a comprehensive characterization of a human cancer cell phosphoproteome.</title>
        <authorList>
            <person name="Zhou H."/>
            <person name="Di Palma S."/>
            <person name="Preisinger C."/>
            <person name="Peng M."/>
            <person name="Polat A.N."/>
            <person name="Heck A.J."/>
            <person name="Mohammed S."/>
        </authorList>
    </citation>
    <scope>PHOSPHORYLATION [LARGE SCALE ANALYSIS] AT SER-881 AND SER-887</scope>
    <scope>IDENTIFICATION BY MASS SPECTROMETRY [LARGE SCALE ANALYSIS]</scope>
    <source>
        <tissue>Cervix carcinoma</tissue>
        <tissue>Erythroleukemia</tissue>
    </source>
</reference>
<reference key="12">
    <citation type="journal article" date="2014" name="J. Proteomics">
        <title>An enzyme assisted RP-RPLC approach for in-depth analysis of human liver phosphoproteome.</title>
        <authorList>
            <person name="Bian Y."/>
            <person name="Song C."/>
            <person name="Cheng K."/>
            <person name="Dong M."/>
            <person name="Wang F."/>
            <person name="Huang J."/>
            <person name="Sun D."/>
            <person name="Wang L."/>
            <person name="Ye M."/>
            <person name="Zou H."/>
        </authorList>
    </citation>
    <scope>PHOSPHORYLATION [LARGE SCALE ANALYSIS] AT SER-887</scope>
    <scope>IDENTIFICATION BY MASS SPECTROMETRY [LARGE SCALE ANALYSIS]</scope>
    <source>
        <tissue>Liver</tissue>
    </source>
</reference>
<reference key="13">
    <citation type="journal article" date="2015" name="Am. J. Med. Genet. A">
        <title>Expanding the SPECC1L mutation phenotypic spectrum to include Teebi hypertelorism syndrome.</title>
        <authorList>
            <person name="Bhoj E.J."/>
            <person name="Li D."/>
            <person name="Harr M.H."/>
            <person name="Tian L."/>
            <person name="Wang T."/>
            <person name="Zhao Y."/>
            <person name="Qiu H."/>
            <person name="Kim C."/>
            <person name="Hoffman J.D."/>
            <person name="Hakonarson H."/>
            <person name="Zackai E.H."/>
        </authorList>
    </citation>
    <scope>INVOLVEMENT IN TBHS1</scope>
    <scope>VARIANTS TBHS1 400-ILE-HIS-401 DEL AND ASP-420</scope>
</reference>
<reference key="14">
    <citation type="journal article" date="2015" name="J. Med. Genet.">
        <title>Mutations in SPECC1L, encoding sperm antigen with calponin homology and coiled-coil domains 1-like, are found in some cases of autosomal dominant Opitz G/BBB syndrome.</title>
        <authorList>
            <person name="Kruszka P."/>
            <person name="Li D."/>
            <person name="Harr M.H."/>
            <person name="Wilson N.R."/>
            <person name="Swarr D."/>
            <person name="McCormick E.M."/>
            <person name="Chiavacci R.M."/>
            <person name="Li M."/>
            <person name="Martinez A.F."/>
            <person name="Hart R.A."/>
            <person name="McDonald-McGinn D.M."/>
            <person name="Deardorff M.A."/>
            <person name="Falk M.J."/>
            <person name="Allanson J.E."/>
            <person name="Hudson C."/>
            <person name="Johnson J.P."/>
            <person name="Saadi I."/>
            <person name="Hakonarson H."/>
            <person name="Muenke M."/>
            <person name="Zackai E.H."/>
        </authorList>
    </citation>
    <scope>INVOLVEMENT IN TBHS1</scope>
    <scope>VARIANTS TBHS1 PRO-397 AND SER-1083</scope>
    <scope>CHARACTERIZATION OF VARIANTS TBHS1 PRO-397 AND SER-1083</scope>
</reference>
<sequence>MKKASRSVGSVPKVSAISKTQTAEKIKPENSSSASTGGKLVKPGTAASLSKTKSSDDLLAGMAGGVTVTNGVKGKKSTCPSAAPSASAPAMTTVENKSKISTGTASSTKRSTSTGNKESSSTRERLRERTRLNQSKKLPSAGQGANDMALAKRSRSRTATECDVRMSKSKSDNQISDRAALEAKVKDLLTLAKTKDVEILHLRNELRDMRAQLGINEDHSEGDEKSEKETIMAHQPTDVESTLLQLQEQNTAIREELNQLKNENRMLKDRLNALGFSLEQRLDNSEKLFGYQSLSPEITPGNQSDGGGTLTSSVEGSAPGSVEDLLSQDENTLMDHQHSNSMDNLDSECSEVYQPLTSSDDALDAPSSSESEGIPSIERSRKGSSGNASEVSVACLTERIHQMEENQHSTSEELQATLQELADLQQITQELNSENERLGEEKVILMESLCQQSDKLEHFSRQIEYFRSLLDEHHISYVIDEDVKSGRYMELEQRYMDLAENARFEREQLLGVQQHLSNTLKMAEQDNKEAQEMIGALKERSHHMERIIESEQKGKAALAATLEEYKATVASDQIEMNRLKAQLENEKQKVAELYSIHNSGDKSDIQDLLESVRLDKEKAETLASSLQEDLAHTRNDANRLQDAIAKVEDEYRAFQEEAKKQIEDLNMTLEKLRSDLDEKETERSDMKETIFELEDEVEQHRAVKLHDNLIISDLENTVKKLQDQKHDMEREIKTLHRRLREESAEWRQFQADLQTAVVIANDIKSEAQEEIGDLKRRLHEAQEKNEKLTKELEEIKSRKQEEERGRVYNYMNAVERDLAALRQGMGLSRRSSTSSEPTPTVKTLIKSFDSASQVPNPAAAAIPRTPLSPSPMKTPPAAAVSPMQRHSISGPISTSKPLTALSDKRPNYGEIPVQEHLLRTSSASRPASLPRVPAMESAKTLSVSRRSSEEVKRDISAQEGASPASLMAMGTTSPQLSLSSSPTASVTPTTRSRIREERKDPLSALAREYGGSKRNALLKWCQKKTEGYQNIDITNFSSSWNDGLAFCALLHTYLPAHIPYQELNSQDKRRNFMLAFQAAESVGIKSTLDINEMVRTERPDWQNVMLYVTAIYKYFET</sequence>